<dbReference type="EMBL" id="CP017623">
    <property type="protein sequence ID" value="AOW25772.1"/>
    <property type="molecule type" value="Genomic_DNA"/>
</dbReference>
<dbReference type="RefSeq" id="XP_718993.2">
    <property type="nucleotide sequence ID" value="XM_713900.2"/>
</dbReference>
<dbReference type="SMR" id="Q5ABD9"/>
<dbReference type="FunCoup" id="Q5ABD9">
    <property type="interactions" value="121"/>
</dbReference>
<dbReference type="STRING" id="237561.Q5ABD9"/>
<dbReference type="EnsemblFungi" id="C1_00750C_A-T">
    <property type="protein sequence ID" value="C1_00750C_A-T-p1"/>
    <property type="gene ID" value="C1_00750C_A"/>
</dbReference>
<dbReference type="GeneID" id="3639326"/>
<dbReference type="KEGG" id="cal:CAALFM_C100750CA"/>
<dbReference type="CGD" id="CAL0000186855">
    <property type="gene designation" value="VPS27"/>
</dbReference>
<dbReference type="VEuPathDB" id="FungiDB:C1_00750C_A"/>
<dbReference type="eggNOG" id="KOG1818">
    <property type="taxonomic scope" value="Eukaryota"/>
</dbReference>
<dbReference type="HOGENOM" id="CLU_011862_2_0_1"/>
<dbReference type="InParanoid" id="Q5ABD9"/>
<dbReference type="OrthoDB" id="957735at2759"/>
<dbReference type="PRO" id="PR:Q5ABD9"/>
<dbReference type="Proteomes" id="UP000000559">
    <property type="component" value="Chromosome 1"/>
</dbReference>
<dbReference type="GO" id="GO:0010008">
    <property type="term" value="C:endosome membrane"/>
    <property type="evidence" value="ECO:0007669"/>
    <property type="project" value="UniProtKB-SubCell"/>
</dbReference>
<dbReference type="GO" id="GO:0033565">
    <property type="term" value="C:ESCRT-0 complex"/>
    <property type="evidence" value="ECO:0000318"/>
    <property type="project" value="GO_Central"/>
</dbReference>
<dbReference type="GO" id="GO:0032266">
    <property type="term" value="F:phosphatidylinositol-3-phosphate binding"/>
    <property type="evidence" value="ECO:0000318"/>
    <property type="project" value="GO_Central"/>
</dbReference>
<dbReference type="GO" id="GO:0043130">
    <property type="term" value="F:ubiquitin binding"/>
    <property type="evidence" value="ECO:0000318"/>
    <property type="project" value="GO_Central"/>
</dbReference>
<dbReference type="GO" id="GO:0008270">
    <property type="term" value="F:zinc ion binding"/>
    <property type="evidence" value="ECO:0007669"/>
    <property type="project" value="UniProtKB-KW"/>
</dbReference>
<dbReference type="GO" id="GO:0006623">
    <property type="term" value="P:protein targeting to vacuole"/>
    <property type="evidence" value="ECO:0000318"/>
    <property type="project" value="GO_Central"/>
</dbReference>
<dbReference type="GO" id="GO:0043328">
    <property type="term" value="P:protein transport to vacuole involved in ubiquitin-dependent protein catabolic process via the multivesicular body sorting pathway"/>
    <property type="evidence" value="ECO:0000318"/>
    <property type="project" value="GO_Central"/>
</dbReference>
<dbReference type="CDD" id="cd21385">
    <property type="entry name" value="GAT_Vps27"/>
    <property type="match status" value="1"/>
</dbReference>
<dbReference type="FunFam" id="1.25.40.90:FF:000039">
    <property type="entry name" value="Vacuolar protein sorting-associated protein 27"/>
    <property type="match status" value="1"/>
</dbReference>
<dbReference type="Gene3D" id="1.20.5.1940">
    <property type="match status" value="1"/>
</dbReference>
<dbReference type="Gene3D" id="1.25.40.90">
    <property type="match status" value="1"/>
</dbReference>
<dbReference type="Gene3D" id="6.10.140.100">
    <property type="match status" value="1"/>
</dbReference>
<dbReference type="Gene3D" id="3.30.40.10">
    <property type="entry name" value="Zinc/RING finger domain, C3HC4 (zinc finger)"/>
    <property type="match status" value="1"/>
</dbReference>
<dbReference type="InterPro" id="IPR008942">
    <property type="entry name" value="ENTH_VHS"/>
</dbReference>
<dbReference type="InterPro" id="IPR017073">
    <property type="entry name" value="HGS/VPS27"/>
</dbReference>
<dbReference type="InterPro" id="IPR003903">
    <property type="entry name" value="UIM_dom"/>
</dbReference>
<dbReference type="InterPro" id="IPR002014">
    <property type="entry name" value="VHS_dom"/>
</dbReference>
<dbReference type="InterPro" id="IPR049425">
    <property type="entry name" value="Vps27_GAT-like"/>
</dbReference>
<dbReference type="InterPro" id="IPR000306">
    <property type="entry name" value="Znf_FYVE"/>
</dbReference>
<dbReference type="InterPro" id="IPR017455">
    <property type="entry name" value="Znf_FYVE-rel"/>
</dbReference>
<dbReference type="InterPro" id="IPR011011">
    <property type="entry name" value="Znf_FYVE_PHD"/>
</dbReference>
<dbReference type="InterPro" id="IPR013083">
    <property type="entry name" value="Znf_RING/FYVE/PHD"/>
</dbReference>
<dbReference type="PANTHER" id="PTHR47794">
    <property type="entry name" value="VACUOLAR PROTEIN SORTING-ASSOCIATED PROTEIN 27"/>
    <property type="match status" value="1"/>
</dbReference>
<dbReference type="PANTHER" id="PTHR47794:SF1">
    <property type="entry name" value="VACUOLAR PROTEIN SORTING-ASSOCIATED PROTEIN 27"/>
    <property type="match status" value="1"/>
</dbReference>
<dbReference type="Pfam" id="PF01363">
    <property type="entry name" value="FYVE"/>
    <property type="match status" value="1"/>
</dbReference>
<dbReference type="Pfam" id="PF02809">
    <property type="entry name" value="UIM"/>
    <property type="match status" value="2"/>
</dbReference>
<dbReference type="Pfam" id="PF00790">
    <property type="entry name" value="VHS"/>
    <property type="match status" value="1"/>
</dbReference>
<dbReference type="Pfam" id="PF21356">
    <property type="entry name" value="Vps27_GAT-like"/>
    <property type="match status" value="1"/>
</dbReference>
<dbReference type="PIRSF" id="PIRSF036956">
    <property type="entry name" value="Hrs_Vps27"/>
    <property type="match status" value="1"/>
</dbReference>
<dbReference type="SMART" id="SM00064">
    <property type="entry name" value="FYVE"/>
    <property type="match status" value="1"/>
</dbReference>
<dbReference type="SMART" id="SM00726">
    <property type="entry name" value="UIM"/>
    <property type="match status" value="2"/>
</dbReference>
<dbReference type="SMART" id="SM00288">
    <property type="entry name" value="VHS"/>
    <property type="match status" value="1"/>
</dbReference>
<dbReference type="SUPFAM" id="SSF48464">
    <property type="entry name" value="ENTH/VHS domain"/>
    <property type="match status" value="1"/>
</dbReference>
<dbReference type="SUPFAM" id="SSF57903">
    <property type="entry name" value="FYVE/PHD zinc finger"/>
    <property type="match status" value="1"/>
</dbReference>
<dbReference type="PROSITE" id="PS50330">
    <property type="entry name" value="UIM"/>
    <property type="match status" value="2"/>
</dbReference>
<dbReference type="PROSITE" id="PS50179">
    <property type="entry name" value="VHS"/>
    <property type="match status" value="1"/>
</dbReference>
<dbReference type="PROSITE" id="PS50178">
    <property type="entry name" value="ZF_FYVE"/>
    <property type="match status" value="1"/>
</dbReference>
<protein>
    <recommendedName>
        <fullName>Vacuolar protein sorting-associated protein 27</fullName>
    </recommendedName>
</protein>
<evidence type="ECO:0000250" key="1"/>
<evidence type="ECO:0000255" key="2">
    <source>
        <dbReference type="PROSITE-ProRule" id="PRU00091"/>
    </source>
</evidence>
<evidence type="ECO:0000255" key="3">
    <source>
        <dbReference type="PROSITE-ProRule" id="PRU00213"/>
    </source>
</evidence>
<evidence type="ECO:0000255" key="4">
    <source>
        <dbReference type="PROSITE-ProRule" id="PRU00218"/>
    </source>
</evidence>
<evidence type="ECO:0000256" key="5">
    <source>
        <dbReference type="SAM" id="MobiDB-lite"/>
    </source>
</evidence>
<evidence type="ECO:0000305" key="6"/>
<feature type="chain" id="PRO_0000292511" description="Vacuolar protein sorting-associated protein 27">
    <location>
        <begin position="1"/>
        <end position="841"/>
    </location>
</feature>
<feature type="domain" description="VHS" evidence="4">
    <location>
        <begin position="30"/>
        <end position="177"/>
    </location>
</feature>
<feature type="domain" description="UIM 1" evidence="3">
    <location>
        <begin position="314"/>
        <end position="333"/>
    </location>
</feature>
<feature type="domain" description="UIM 2" evidence="3">
    <location>
        <begin position="369"/>
        <end position="388"/>
    </location>
</feature>
<feature type="zinc finger region" description="FYVE-type; atypical" evidence="2">
    <location>
        <begin position="210"/>
        <end position="270"/>
    </location>
</feature>
<feature type="region of interest" description="Disordered" evidence="5">
    <location>
        <begin position="273"/>
        <end position="317"/>
    </location>
</feature>
<feature type="region of interest" description="Disordered" evidence="5">
    <location>
        <begin position="329"/>
        <end position="371"/>
    </location>
</feature>
<feature type="region of interest" description="Disordered" evidence="5">
    <location>
        <begin position="384"/>
        <end position="459"/>
    </location>
</feature>
<feature type="region of interest" description="Disordered" evidence="5">
    <location>
        <begin position="558"/>
        <end position="841"/>
    </location>
</feature>
<feature type="compositionally biased region" description="Polar residues" evidence="5">
    <location>
        <begin position="278"/>
        <end position="296"/>
    </location>
</feature>
<feature type="compositionally biased region" description="Acidic residues" evidence="5">
    <location>
        <begin position="361"/>
        <end position="371"/>
    </location>
</feature>
<feature type="compositionally biased region" description="Low complexity" evidence="5">
    <location>
        <begin position="392"/>
        <end position="411"/>
    </location>
</feature>
<feature type="compositionally biased region" description="Polar residues" evidence="5">
    <location>
        <begin position="417"/>
        <end position="427"/>
    </location>
</feature>
<feature type="compositionally biased region" description="Low complexity" evidence="5">
    <location>
        <begin position="428"/>
        <end position="457"/>
    </location>
</feature>
<feature type="compositionally biased region" description="Low complexity" evidence="5">
    <location>
        <begin position="558"/>
        <end position="584"/>
    </location>
</feature>
<feature type="compositionally biased region" description="Polar residues" evidence="5">
    <location>
        <begin position="592"/>
        <end position="665"/>
    </location>
</feature>
<feature type="compositionally biased region" description="Acidic residues" evidence="5">
    <location>
        <begin position="669"/>
        <end position="678"/>
    </location>
</feature>
<feature type="compositionally biased region" description="Polar residues" evidence="5">
    <location>
        <begin position="711"/>
        <end position="721"/>
    </location>
</feature>
<feature type="compositionally biased region" description="Basic and acidic residues" evidence="5">
    <location>
        <begin position="776"/>
        <end position="787"/>
    </location>
</feature>
<feature type="compositionally biased region" description="Low complexity" evidence="5">
    <location>
        <begin position="819"/>
        <end position="830"/>
    </location>
</feature>
<feature type="binding site" evidence="2">
    <location>
        <position position="216"/>
    </location>
    <ligand>
        <name>Zn(2+)</name>
        <dbReference type="ChEBI" id="CHEBI:29105"/>
        <label>1</label>
    </ligand>
</feature>
<feature type="binding site" evidence="2">
    <location>
        <position position="219"/>
    </location>
    <ligand>
        <name>Zn(2+)</name>
        <dbReference type="ChEBI" id="CHEBI:29105"/>
        <label>1</label>
    </ligand>
</feature>
<feature type="binding site" evidence="2">
    <location>
        <position position="232"/>
    </location>
    <ligand>
        <name>Zn(2+)</name>
        <dbReference type="ChEBI" id="CHEBI:29105"/>
        <label>2</label>
    </ligand>
</feature>
<feature type="binding site" evidence="2">
    <location>
        <position position="235"/>
    </location>
    <ligand>
        <name>Zn(2+)</name>
        <dbReference type="ChEBI" id="CHEBI:29105"/>
        <label>2</label>
    </ligand>
</feature>
<feature type="binding site" evidence="2">
    <location>
        <position position="240"/>
    </location>
    <ligand>
        <name>Zn(2+)</name>
        <dbReference type="ChEBI" id="CHEBI:29105"/>
        <label>1</label>
    </ligand>
</feature>
<feature type="binding site" evidence="2">
    <location>
        <position position="243"/>
    </location>
    <ligand>
        <name>Zn(2+)</name>
        <dbReference type="ChEBI" id="CHEBI:29105"/>
        <label>1</label>
    </ligand>
</feature>
<feature type="binding site" evidence="2">
    <location>
        <position position="262"/>
    </location>
    <ligand>
        <name>Zn(2+)</name>
        <dbReference type="ChEBI" id="CHEBI:29105"/>
        <label>2</label>
    </ligand>
</feature>
<feature type="binding site" evidence="2">
    <location>
        <position position="265"/>
    </location>
    <ligand>
        <name>Zn(2+)</name>
        <dbReference type="ChEBI" id="CHEBI:29105"/>
        <label>2</label>
    </ligand>
</feature>
<reference key="1">
    <citation type="journal article" date="2004" name="Proc. Natl. Acad. Sci. U.S.A.">
        <title>The diploid genome sequence of Candida albicans.</title>
        <authorList>
            <person name="Jones T."/>
            <person name="Federspiel N.A."/>
            <person name="Chibana H."/>
            <person name="Dungan J."/>
            <person name="Kalman S."/>
            <person name="Magee B.B."/>
            <person name="Newport G."/>
            <person name="Thorstenson Y.R."/>
            <person name="Agabian N."/>
            <person name="Magee P.T."/>
            <person name="Davis R.W."/>
            <person name="Scherer S."/>
        </authorList>
    </citation>
    <scope>NUCLEOTIDE SEQUENCE [LARGE SCALE GENOMIC DNA]</scope>
    <source>
        <strain>SC5314 / ATCC MYA-2876</strain>
    </source>
</reference>
<reference key="2">
    <citation type="journal article" date="2007" name="Genome Biol.">
        <title>Assembly of the Candida albicans genome into sixteen supercontigs aligned on the eight chromosomes.</title>
        <authorList>
            <person name="van het Hoog M."/>
            <person name="Rast T.J."/>
            <person name="Martchenko M."/>
            <person name="Grindle S."/>
            <person name="Dignard D."/>
            <person name="Hogues H."/>
            <person name="Cuomo C."/>
            <person name="Berriman M."/>
            <person name="Scherer S."/>
            <person name="Magee B.B."/>
            <person name="Whiteway M."/>
            <person name="Chibana H."/>
            <person name="Nantel A."/>
            <person name="Magee P.T."/>
        </authorList>
    </citation>
    <scope>GENOME REANNOTATION</scope>
    <source>
        <strain>SC5314 / ATCC MYA-2876</strain>
    </source>
</reference>
<reference key="3">
    <citation type="journal article" date="2013" name="Genome Biol.">
        <title>Assembly of a phased diploid Candida albicans genome facilitates allele-specific measurements and provides a simple model for repeat and indel structure.</title>
        <authorList>
            <person name="Muzzey D."/>
            <person name="Schwartz K."/>
            <person name="Weissman J.S."/>
            <person name="Sherlock G."/>
        </authorList>
    </citation>
    <scope>NUCLEOTIDE SEQUENCE [LARGE SCALE GENOMIC DNA]</scope>
    <scope>GENOME REANNOTATION</scope>
    <source>
        <strain>SC5314 / ATCC MYA-2876</strain>
    </source>
</reference>
<sequence>MSWFGRATSDAPVATISQVELDNKIVEATSESIPNGEIDLSIAFEITDLIRSKKISNKIAMRSLKKRLTLIYLNPNLLLSSLKLIDLCIKNCGFGFLIEISSKEFMDYLIDFIFKIHYNTKELTYGHGGGDVGNKIKIGEMILKYLQNWKIIFENQQQLQYVEKKYQELKNQGFEFPDNNNNSGENDDFNDQVTQLNSKFVVDSEVPPDWVDNEECMICYSPFSMLNRKHHCRACGGVFCQTHSSNNIPLVNLGIMEPVRVCDNCFAKYDKSKKHSRNTSSSGDYNHQSRSIQNDYGGTHGSRRQGNNNDDDNDEEEQIRKAIELSLKESGAGGSGSGGPNSIPSQSRPSAQPPIDREPESETGNADDDEDAEMKAAIAASLKEYETEKSRQSQYQQIQPVQSTQSTQPESDLYNISFPTFSSTSNYPQPQFTASQPPPQQQQQQQAQQQAPSQDLSQAEEEQINLFITLMNSIKNDSRKQKDIMYDTNLNELYGKVIKLRPKLNKSLRNSIEKYETFLEMNNKISTITRLYDQFLEQKLNMAYGNHHISTQFTGVPQQQQEGQFTGSQQQQQQQQPHLPAQGTGYPRYGGSDTNVAQQQQQPPISPNEFYNNLPQHTGFQNYPSYPQNQGTAPDNSYLSQQPSGASTRQKQQQPPIQTYPNQLQPSEPDFEDDDNEEPVNTPQIRVAHNRTSSGSCPLYPTNDIIPDPYSANTNKSTTPNSDDHNYVAVSLPHYPPPEDLSNELPPQQHYVRRASSSLPPNAYEDASLKYPTLENVEHDYDKKKNQEQQQSVNESDFPDVSKVSQFNNRGEEDEGRRNSGASGASSNKKFVVEPEPLIEL</sequence>
<name>VPS27_CANAL</name>
<gene>
    <name type="primary">VPS27</name>
    <name type="ordered locus">CAALFM_C100750CA</name>
    <name type="ORF">CaO19.13452</name>
    <name type="ORF">CaO19.6031</name>
</gene>
<proteinExistence type="inferred from homology"/>
<comment type="function">
    <text evidence="1">Component of the ESCRT-0 complex which is the sorting receptor for ubiquitinated cargo proteins at the multivesicular body (MVB) and recruits ESCRT-I to the MVB outer membrane.</text>
</comment>
<comment type="subunit">
    <text>Component of the ESCRT-0 complex composed of HSE1 and VPS27.</text>
</comment>
<comment type="subcellular location">
    <subcellularLocation>
        <location evidence="1">Endosome membrane</location>
        <topology evidence="1">Peripheral membrane protein</topology>
        <orientation evidence="1">Cytoplasmic side</orientation>
    </subcellularLocation>
</comment>
<comment type="domain">
    <text>The FYVE domain is involved in the binding to phosphatidylinositol 3-phosphate (PtdIns(3)P) which is required for the association to endosomal membranes.</text>
</comment>
<comment type="domain">
    <text evidence="1">Both IUM domains are necessary for efficient binding to ubiquitin.</text>
</comment>
<comment type="similarity">
    <text evidence="6">Belongs to the VPS27 family.</text>
</comment>
<accession>Q5ABD9</accession>
<accession>A0A1D8PCA9</accession>
<organism>
    <name type="scientific">Candida albicans (strain SC5314 / ATCC MYA-2876)</name>
    <name type="common">Yeast</name>
    <dbReference type="NCBI Taxonomy" id="237561"/>
    <lineage>
        <taxon>Eukaryota</taxon>
        <taxon>Fungi</taxon>
        <taxon>Dikarya</taxon>
        <taxon>Ascomycota</taxon>
        <taxon>Saccharomycotina</taxon>
        <taxon>Pichiomycetes</taxon>
        <taxon>Debaryomycetaceae</taxon>
        <taxon>Candida/Lodderomyces clade</taxon>
        <taxon>Candida</taxon>
    </lineage>
</organism>
<keyword id="KW-0967">Endosome</keyword>
<keyword id="KW-0472">Membrane</keyword>
<keyword id="KW-0479">Metal-binding</keyword>
<keyword id="KW-1185">Reference proteome</keyword>
<keyword id="KW-0677">Repeat</keyword>
<keyword id="KW-0862">Zinc</keyword>
<keyword id="KW-0863">Zinc-finger</keyword>